<organism>
    <name type="scientific">Bordetella parapertussis (strain 12822 / ATCC BAA-587 / NCTC 13253)</name>
    <dbReference type="NCBI Taxonomy" id="257311"/>
    <lineage>
        <taxon>Bacteria</taxon>
        <taxon>Pseudomonadati</taxon>
        <taxon>Pseudomonadota</taxon>
        <taxon>Betaproteobacteria</taxon>
        <taxon>Burkholderiales</taxon>
        <taxon>Alcaligenaceae</taxon>
        <taxon>Bordetella</taxon>
    </lineage>
</organism>
<comment type="function">
    <text evidence="1">Key component of the proton channel; it plays a direct role in the translocation of protons across the membrane.</text>
</comment>
<comment type="subunit">
    <text evidence="1">F-type ATPases have 2 components, CF(1) - the catalytic core - and CF(0) - the membrane proton channel. CF(1) has five subunits: alpha(3), beta(3), gamma(1), delta(1), epsilon(1). CF(0) has three main subunits: a(1), b(2) and c(9-12). The alpha and beta chains form an alternating ring which encloses part of the gamma chain. CF(1) is attached to CF(0) by a central stalk formed by the gamma and epsilon chains, while a peripheral stalk is formed by the delta and b chains.</text>
</comment>
<comment type="subcellular location">
    <subcellularLocation>
        <location evidence="1">Cell inner membrane</location>
        <topology evidence="1">Multi-pass membrane protein</topology>
    </subcellularLocation>
</comment>
<comment type="similarity">
    <text evidence="1">Belongs to the ATPase A chain family.</text>
</comment>
<feature type="chain" id="PRO_1000145263" description="ATP synthase subunit a">
    <location>
        <begin position="1"/>
        <end position="293"/>
    </location>
</feature>
<feature type="transmembrane region" description="Helical" evidence="1">
    <location>
        <begin position="40"/>
        <end position="60"/>
    </location>
</feature>
<feature type="transmembrane region" description="Helical" evidence="1">
    <location>
        <begin position="97"/>
        <end position="117"/>
    </location>
</feature>
<feature type="transmembrane region" description="Helical" evidence="1">
    <location>
        <begin position="151"/>
        <end position="171"/>
    </location>
</feature>
<feature type="transmembrane region" description="Helical" evidence="1">
    <location>
        <begin position="188"/>
        <end position="208"/>
    </location>
</feature>
<feature type="transmembrane region" description="Helical" evidence="1">
    <location>
        <begin position="225"/>
        <end position="245"/>
    </location>
</feature>
<feature type="transmembrane region" description="Helical" evidence="1">
    <location>
        <begin position="264"/>
        <end position="284"/>
    </location>
</feature>
<keyword id="KW-0066">ATP synthesis</keyword>
<keyword id="KW-0997">Cell inner membrane</keyword>
<keyword id="KW-1003">Cell membrane</keyword>
<keyword id="KW-0138">CF(0)</keyword>
<keyword id="KW-0375">Hydrogen ion transport</keyword>
<keyword id="KW-0406">Ion transport</keyword>
<keyword id="KW-0472">Membrane</keyword>
<keyword id="KW-0812">Transmembrane</keyword>
<keyword id="KW-1133">Transmembrane helix</keyword>
<keyword id="KW-0813">Transport</keyword>
<accession>Q7W3A4</accession>
<dbReference type="EMBL" id="BX640435">
    <property type="protein sequence ID" value="CAE39420.1"/>
    <property type="molecule type" value="Genomic_DNA"/>
</dbReference>
<dbReference type="RefSeq" id="WP_003815364.1">
    <property type="nucleotide sequence ID" value="NC_002928.3"/>
</dbReference>
<dbReference type="SMR" id="Q7W3A4"/>
<dbReference type="GeneID" id="93205937"/>
<dbReference type="KEGG" id="bpa:BPP4141"/>
<dbReference type="HOGENOM" id="CLU_041018_1_0_4"/>
<dbReference type="Proteomes" id="UP000001421">
    <property type="component" value="Chromosome"/>
</dbReference>
<dbReference type="GO" id="GO:0005886">
    <property type="term" value="C:plasma membrane"/>
    <property type="evidence" value="ECO:0007669"/>
    <property type="project" value="UniProtKB-SubCell"/>
</dbReference>
<dbReference type="GO" id="GO:0045259">
    <property type="term" value="C:proton-transporting ATP synthase complex"/>
    <property type="evidence" value="ECO:0007669"/>
    <property type="project" value="UniProtKB-KW"/>
</dbReference>
<dbReference type="GO" id="GO:0046933">
    <property type="term" value="F:proton-transporting ATP synthase activity, rotational mechanism"/>
    <property type="evidence" value="ECO:0007669"/>
    <property type="project" value="UniProtKB-UniRule"/>
</dbReference>
<dbReference type="GO" id="GO:0042777">
    <property type="term" value="P:proton motive force-driven plasma membrane ATP synthesis"/>
    <property type="evidence" value="ECO:0007669"/>
    <property type="project" value="TreeGrafter"/>
</dbReference>
<dbReference type="CDD" id="cd00310">
    <property type="entry name" value="ATP-synt_Fo_a_6"/>
    <property type="match status" value="1"/>
</dbReference>
<dbReference type="FunFam" id="1.20.120.220:FF:000002">
    <property type="entry name" value="ATP synthase subunit a"/>
    <property type="match status" value="1"/>
</dbReference>
<dbReference type="Gene3D" id="1.20.120.220">
    <property type="entry name" value="ATP synthase, F0 complex, subunit A"/>
    <property type="match status" value="1"/>
</dbReference>
<dbReference type="HAMAP" id="MF_01393">
    <property type="entry name" value="ATP_synth_a_bact"/>
    <property type="match status" value="1"/>
</dbReference>
<dbReference type="InterPro" id="IPR045082">
    <property type="entry name" value="ATP_syn_F0_a_bact/chloroplast"/>
</dbReference>
<dbReference type="InterPro" id="IPR000568">
    <property type="entry name" value="ATP_synth_F0_asu"/>
</dbReference>
<dbReference type="InterPro" id="IPR023011">
    <property type="entry name" value="ATP_synth_F0_asu_AS"/>
</dbReference>
<dbReference type="InterPro" id="IPR035908">
    <property type="entry name" value="F0_ATP_A_sf"/>
</dbReference>
<dbReference type="NCBIfam" id="TIGR01131">
    <property type="entry name" value="ATP_synt_6_or_A"/>
    <property type="match status" value="1"/>
</dbReference>
<dbReference type="NCBIfam" id="NF004477">
    <property type="entry name" value="PRK05815.1-1"/>
    <property type="match status" value="1"/>
</dbReference>
<dbReference type="PANTHER" id="PTHR42823">
    <property type="entry name" value="ATP SYNTHASE SUBUNIT A, CHLOROPLASTIC"/>
    <property type="match status" value="1"/>
</dbReference>
<dbReference type="PANTHER" id="PTHR42823:SF3">
    <property type="entry name" value="ATP SYNTHASE SUBUNIT A, CHLOROPLASTIC"/>
    <property type="match status" value="1"/>
</dbReference>
<dbReference type="Pfam" id="PF00119">
    <property type="entry name" value="ATP-synt_A"/>
    <property type="match status" value="1"/>
</dbReference>
<dbReference type="SUPFAM" id="SSF81336">
    <property type="entry name" value="F1F0 ATP synthase subunit A"/>
    <property type="match status" value="1"/>
</dbReference>
<dbReference type="PROSITE" id="PS00449">
    <property type="entry name" value="ATPASE_A"/>
    <property type="match status" value="1"/>
</dbReference>
<proteinExistence type="inferred from homology"/>
<evidence type="ECO:0000255" key="1">
    <source>
        <dbReference type="HAMAP-Rule" id="MF_01393"/>
    </source>
</evidence>
<sequence length="293" mass="32102">MAAPSGASPQSEYIQHHLVHLNNIGEKQSVIAQFNVINYDSLFWSILMGLLVVFCLWLAARRATAGVPGRFQGFIEMIVDMVDDQAKSIVTNAKSRLFVAPLALTVFLWIILMNALDLLPVDLLPSIWRMTGLGAEHGDPLYYHRILPTADLNVPMGMSLGVLLLMFYYGIKIKHPGGFVKELFTAPFHAHGLASLVLAPFNLLLNLIEYAAKSVSLGMRLFGNMFAGELIFMLIALLGGAWTGFNGASIGLGIGHVLAGSVWAIFHILIVLLQAFIFMMLTLVYIGQAHEGH</sequence>
<protein>
    <recommendedName>
        <fullName evidence="1">ATP synthase subunit a</fullName>
    </recommendedName>
    <alternativeName>
        <fullName evidence="1">ATP synthase F0 sector subunit a</fullName>
    </alternativeName>
    <alternativeName>
        <fullName evidence="1">F-ATPase subunit 6</fullName>
    </alternativeName>
</protein>
<name>ATP6_BORPA</name>
<reference key="1">
    <citation type="journal article" date="2003" name="Nat. Genet.">
        <title>Comparative analysis of the genome sequences of Bordetella pertussis, Bordetella parapertussis and Bordetella bronchiseptica.</title>
        <authorList>
            <person name="Parkhill J."/>
            <person name="Sebaihia M."/>
            <person name="Preston A."/>
            <person name="Murphy L.D."/>
            <person name="Thomson N.R."/>
            <person name="Harris D.E."/>
            <person name="Holden M.T.G."/>
            <person name="Churcher C.M."/>
            <person name="Bentley S.D."/>
            <person name="Mungall K.L."/>
            <person name="Cerdeno-Tarraga A.-M."/>
            <person name="Temple L."/>
            <person name="James K.D."/>
            <person name="Harris B."/>
            <person name="Quail M.A."/>
            <person name="Achtman M."/>
            <person name="Atkin R."/>
            <person name="Baker S."/>
            <person name="Basham D."/>
            <person name="Bason N."/>
            <person name="Cherevach I."/>
            <person name="Chillingworth T."/>
            <person name="Collins M."/>
            <person name="Cronin A."/>
            <person name="Davis P."/>
            <person name="Doggett J."/>
            <person name="Feltwell T."/>
            <person name="Goble A."/>
            <person name="Hamlin N."/>
            <person name="Hauser H."/>
            <person name="Holroyd S."/>
            <person name="Jagels K."/>
            <person name="Leather S."/>
            <person name="Moule S."/>
            <person name="Norberczak H."/>
            <person name="O'Neil S."/>
            <person name="Ormond D."/>
            <person name="Price C."/>
            <person name="Rabbinowitsch E."/>
            <person name="Rutter S."/>
            <person name="Sanders M."/>
            <person name="Saunders D."/>
            <person name="Seeger K."/>
            <person name="Sharp S."/>
            <person name="Simmonds M."/>
            <person name="Skelton J."/>
            <person name="Squares R."/>
            <person name="Squares S."/>
            <person name="Stevens K."/>
            <person name="Unwin L."/>
            <person name="Whitehead S."/>
            <person name="Barrell B.G."/>
            <person name="Maskell D.J."/>
        </authorList>
    </citation>
    <scope>NUCLEOTIDE SEQUENCE [LARGE SCALE GENOMIC DNA]</scope>
    <source>
        <strain>12822 / ATCC BAA-587 / NCTC 13253</strain>
    </source>
</reference>
<gene>
    <name evidence="1" type="primary">atpB</name>
    <name type="ordered locus">BPP4141</name>
</gene>